<accession>P56145</accession>
<proteinExistence type="inferred from homology"/>
<name>SYFB_HELPY</name>
<dbReference type="EC" id="6.1.1.20"/>
<dbReference type="EMBL" id="AE000511">
    <property type="protein sequence ID" value="AAD07471.1"/>
    <property type="molecule type" value="Genomic_DNA"/>
</dbReference>
<dbReference type="PIR" id="B64570">
    <property type="entry name" value="B64570"/>
</dbReference>
<dbReference type="RefSeq" id="NP_207200.1">
    <property type="nucleotide sequence ID" value="NC_000915.1"/>
</dbReference>
<dbReference type="RefSeq" id="WP_000777286.1">
    <property type="nucleotide sequence ID" value="NC_018939.1"/>
</dbReference>
<dbReference type="SMR" id="P56145"/>
<dbReference type="DIP" id="DIP-3416N"/>
<dbReference type="FunCoup" id="P56145">
    <property type="interactions" value="336"/>
</dbReference>
<dbReference type="IntAct" id="P56145">
    <property type="interactions" value="8"/>
</dbReference>
<dbReference type="MINT" id="P56145"/>
<dbReference type="STRING" id="85962.HP_0402"/>
<dbReference type="PaxDb" id="85962-C694_02040"/>
<dbReference type="EnsemblBacteria" id="AAD07471">
    <property type="protein sequence ID" value="AAD07471"/>
    <property type="gene ID" value="HP_0402"/>
</dbReference>
<dbReference type="KEGG" id="heo:C694_02040"/>
<dbReference type="KEGG" id="hpy:HP_0402"/>
<dbReference type="PATRIC" id="fig|85962.47.peg.426"/>
<dbReference type="eggNOG" id="COG0072">
    <property type="taxonomic scope" value="Bacteria"/>
</dbReference>
<dbReference type="eggNOG" id="COG0073">
    <property type="taxonomic scope" value="Bacteria"/>
</dbReference>
<dbReference type="InParanoid" id="P56145"/>
<dbReference type="OrthoDB" id="9805455at2"/>
<dbReference type="PhylomeDB" id="P56145"/>
<dbReference type="Proteomes" id="UP000000429">
    <property type="component" value="Chromosome"/>
</dbReference>
<dbReference type="GO" id="GO:0009328">
    <property type="term" value="C:phenylalanine-tRNA ligase complex"/>
    <property type="evidence" value="ECO:0000318"/>
    <property type="project" value="GO_Central"/>
</dbReference>
<dbReference type="GO" id="GO:0005524">
    <property type="term" value="F:ATP binding"/>
    <property type="evidence" value="ECO:0007669"/>
    <property type="project" value="UniProtKB-UniRule"/>
</dbReference>
<dbReference type="GO" id="GO:0000287">
    <property type="term" value="F:magnesium ion binding"/>
    <property type="evidence" value="ECO:0007669"/>
    <property type="project" value="UniProtKB-UniRule"/>
</dbReference>
<dbReference type="GO" id="GO:0004826">
    <property type="term" value="F:phenylalanine-tRNA ligase activity"/>
    <property type="evidence" value="ECO:0007669"/>
    <property type="project" value="UniProtKB-UniRule"/>
</dbReference>
<dbReference type="GO" id="GO:0000049">
    <property type="term" value="F:tRNA binding"/>
    <property type="evidence" value="ECO:0007669"/>
    <property type="project" value="UniProtKB-KW"/>
</dbReference>
<dbReference type="GO" id="GO:0006432">
    <property type="term" value="P:phenylalanyl-tRNA aminoacylation"/>
    <property type="evidence" value="ECO:0000318"/>
    <property type="project" value="GO_Central"/>
</dbReference>
<dbReference type="CDD" id="cd00769">
    <property type="entry name" value="PheRS_beta_core"/>
    <property type="match status" value="1"/>
</dbReference>
<dbReference type="CDD" id="cd02796">
    <property type="entry name" value="tRNA_bind_bactPheRS"/>
    <property type="match status" value="1"/>
</dbReference>
<dbReference type="FunFam" id="2.40.50.140:FF:000258">
    <property type="entry name" value="Phenylalanine--tRNA ligase beta subunit"/>
    <property type="match status" value="1"/>
</dbReference>
<dbReference type="FunFam" id="3.30.930.10:FF:000185">
    <property type="entry name" value="Phenylalanine--tRNA ligase beta subunit"/>
    <property type="match status" value="1"/>
</dbReference>
<dbReference type="Gene3D" id="3.30.56.10">
    <property type="match status" value="2"/>
</dbReference>
<dbReference type="Gene3D" id="3.30.930.10">
    <property type="entry name" value="Bira Bifunctional Protein, Domain 2"/>
    <property type="match status" value="1"/>
</dbReference>
<dbReference type="Gene3D" id="3.30.70.380">
    <property type="entry name" value="Ferrodoxin-fold anticodon-binding domain"/>
    <property type="match status" value="1"/>
</dbReference>
<dbReference type="Gene3D" id="2.40.50.140">
    <property type="entry name" value="Nucleic acid-binding proteins"/>
    <property type="match status" value="1"/>
</dbReference>
<dbReference type="HAMAP" id="MF_00283">
    <property type="entry name" value="Phe_tRNA_synth_beta1"/>
    <property type="match status" value="1"/>
</dbReference>
<dbReference type="InterPro" id="IPR045864">
    <property type="entry name" value="aa-tRNA-synth_II/BPL/LPL"/>
</dbReference>
<dbReference type="InterPro" id="IPR009061">
    <property type="entry name" value="DNA-bd_dom_put_sf"/>
</dbReference>
<dbReference type="InterPro" id="IPR005121">
    <property type="entry name" value="Fdx_antiC-bd"/>
</dbReference>
<dbReference type="InterPro" id="IPR036690">
    <property type="entry name" value="Fdx_antiC-bd_sf"/>
</dbReference>
<dbReference type="InterPro" id="IPR012340">
    <property type="entry name" value="NA-bd_OB-fold"/>
</dbReference>
<dbReference type="InterPro" id="IPR045060">
    <property type="entry name" value="Phe-tRNA-ligase_IIc_bsu"/>
</dbReference>
<dbReference type="InterPro" id="IPR004532">
    <property type="entry name" value="Phe-tRNA-ligase_IIc_bsu_bact"/>
</dbReference>
<dbReference type="InterPro" id="IPR041616">
    <property type="entry name" value="PheRS_beta_core"/>
</dbReference>
<dbReference type="InterPro" id="IPR002547">
    <property type="entry name" value="tRNA-bd_dom"/>
</dbReference>
<dbReference type="InterPro" id="IPR033714">
    <property type="entry name" value="tRNA_bind_bactPheRS"/>
</dbReference>
<dbReference type="InterPro" id="IPR005147">
    <property type="entry name" value="tRNA_synthase_B5-dom"/>
</dbReference>
<dbReference type="NCBIfam" id="TIGR00472">
    <property type="entry name" value="pheT_bact"/>
    <property type="match status" value="1"/>
</dbReference>
<dbReference type="NCBIfam" id="NF045760">
    <property type="entry name" value="YtpR"/>
    <property type="match status" value="1"/>
</dbReference>
<dbReference type="PANTHER" id="PTHR10947:SF0">
    <property type="entry name" value="PHENYLALANINE--TRNA LIGASE BETA SUBUNIT"/>
    <property type="match status" value="1"/>
</dbReference>
<dbReference type="PANTHER" id="PTHR10947">
    <property type="entry name" value="PHENYLALANYL-TRNA SYNTHETASE BETA CHAIN AND LEUCINE-RICH REPEAT-CONTAINING PROTEIN 47"/>
    <property type="match status" value="1"/>
</dbReference>
<dbReference type="Pfam" id="PF03484">
    <property type="entry name" value="B5"/>
    <property type="match status" value="1"/>
</dbReference>
<dbReference type="Pfam" id="PF03147">
    <property type="entry name" value="FDX-ACB"/>
    <property type="match status" value="1"/>
</dbReference>
<dbReference type="Pfam" id="PF01588">
    <property type="entry name" value="tRNA_bind"/>
    <property type="match status" value="1"/>
</dbReference>
<dbReference type="Pfam" id="PF17759">
    <property type="entry name" value="tRNA_synthFbeta"/>
    <property type="match status" value="1"/>
</dbReference>
<dbReference type="SMART" id="SM00874">
    <property type="entry name" value="B5"/>
    <property type="match status" value="1"/>
</dbReference>
<dbReference type="SMART" id="SM00896">
    <property type="entry name" value="FDX-ACB"/>
    <property type="match status" value="1"/>
</dbReference>
<dbReference type="SUPFAM" id="SSF54991">
    <property type="entry name" value="Anticodon-binding domain of PheRS"/>
    <property type="match status" value="1"/>
</dbReference>
<dbReference type="SUPFAM" id="SSF55681">
    <property type="entry name" value="Class II aaRS and biotin synthetases"/>
    <property type="match status" value="1"/>
</dbReference>
<dbReference type="SUPFAM" id="SSF50249">
    <property type="entry name" value="Nucleic acid-binding proteins"/>
    <property type="match status" value="1"/>
</dbReference>
<dbReference type="SUPFAM" id="SSF46955">
    <property type="entry name" value="Putative DNA-binding domain"/>
    <property type="match status" value="1"/>
</dbReference>
<dbReference type="PROSITE" id="PS51483">
    <property type="entry name" value="B5"/>
    <property type="match status" value="1"/>
</dbReference>
<dbReference type="PROSITE" id="PS51447">
    <property type="entry name" value="FDX_ACB"/>
    <property type="match status" value="1"/>
</dbReference>
<dbReference type="PROSITE" id="PS50886">
    <property type="entry name" value="TRBD"/>
    <property type="match status" value="1"/>
</dbReference>
<keyword id="KW-0030">Aminoacyl-tRNA synthetase</keyword>
<keyword id="KW-0067">ATP-binding</keyword>
<keyword id="KW-0963">Cytoplasm</keyword>
<keyword id="KW-0436">Ligase</keyword>
<keyword id="KW-0460">Magnesium</keyword>
<keyword id="KW-0479">Metal-binding</keyword>
<keyword id="KW-0547">Nucleotide-binding</keyword>
<keyword id="KW-0648">Protein biosynthesis</keyword>
<keyword id="KW-1185">Reference proteome</keyword>
<keyword id="KW-0694">RNA-binding</keyword>
<keyword id="KW-0820">tRNA-binding</keyword>
<organism>
    <name type="scientific">Helicobacter pylori (strain ATCC 700392 / 26695)</name>
    <name type="common">Campylobacter pylori</name>
    <dbReference type="NCBI Taxonomy" id="85962"/>
    <lineage>
        <taxon>Bacteria</taxon>
        <taxon>Pseudomonadati</taxon>
        <taxon>Campylobacterota</taxon>
        <taxon>Epsilonproteobacteria</taxon>
        <taxon>Campylobacterales</taxon>
        <taxon>Helicobacteraceae</taxon>
        <taxon>Helicobacter</taxon>
    </lineage>
</organism>
<comment type="catalytic activity">
    <reaction>
        <text>tRNA(Phe) + L-phenylalanine + ATP = L-phenylalanyl-tRNA(Phe) + AMP + diphosphate + H(+)</text>
        <dbReference type="Rhea" id="RHEA:19413"/>
        <dbReference type="Rhea" id="RHEA-COMP:9668"/>
        <dbReference type="Rhea" id="RHEA-COMP:9699"/>
        <dbReference type="ChEBI" id="CHEBI:15378"/>
        <dbReference type="ChEBI" id="CHEBI:30616"/>
        <dbReference type="ChEBI" id="CHEBI:33019"/>
        <dbReference type="ChEBI" id="CHEBI:58095"/>
        <dbReference type="ChEBI" id="CHEBI:78442"/>
        <dbReference type="ChEBI" id="CHEBI:78531"/>
        <dbReference type="ChEBI" id="CHEBI:456215"/>
        <dbReference type="EC" id="6.1.1.20"/>
    </reaction>
</comment>
<comment type="cofactor">
    <cofactor evidence="1">
        <name>Mg(2+)</name>
        <dbReference type="ChEBI" id="CHEBI:18420"/>
    </cofactor>
    <text evidence="1">Binds 2 magnesium ions per tetramer.</text>
</comment>
<comment type="subunit">
    <text evidence="1">Tetramer of two alpha and two beta subunits.</text>
</comment>
<comment type="subcellular location">
    <subcellularLocation>
        <location evidence="1">Cytoplasm</location>
    </subcellularLocation>
</comment>
<comment type="similarity">
    <text evidence="2">Belongs to the phenylalanyl-tRNA synthetase beta subunit family. Type 1 subfamily.</text>
</comment>
<sequence length="764" mass="85136">MKLSINDLNVFVNTPKDIAKLCEDLSRLGLEVESCIPCIAPKNVVVGKILEKAPHKNAEKLSVCQVDVGKEVLQIVCGAKNVAPNQFVPVALNGALIGSTTIAKTELRGVESHGMICSSIELGFPKINDGILELDESVGELVLGKELNEYAPFNTHVLEISLTPNRGDCLSVLGIAREISAFYHTPLKPIKALNFTPKSGLITLSAGENIESHLAYYLICNHSLKTPLNIKLSLAHNNALSENDLNNFIEFSTHFSGVIMNAYSLNTTPMDLSVKNDENNLESVYINHQKRSTIAIKHQVQKDLSECLLLEASYTDPISLSLKLHALKDKTLQKDNALIYRSARGSNPNLSDGLNFLSAHLKATILESKQTEHSLKDRTLTFQLEDITEILGLAVEKEKIQGILKNLGFKVSVKEPNSKPQILEVIAPNFRHDIKTIQDIAEEILRFVGIDNLVSKPLHCVSSKNSNPNYDTHRFFENLKHKALACGFKEVIHYVFYSKEKQQKLGFEVLEDPLELQNPITTELNTLRTSLVCGLLDASLRNKNLGFKSIALYEKGSVYNSKREEIQKLGFLISGLQKKESYPDTKGKAWDFYSFAECVSKVIGDFSLEKLTTQTPINHPYQSAKIIQNHEIIGVIAKIHPKVIQELDLFESYYAEIDAFKLKRPAMLLKPFSIYPSSVRDLTLIIDENTAFSGIKKALKDAQIPNLSEILPLDIFKESNNSIALSVRCVIHSLEKTLNDEEVNSAVQKALEILEKEFNARLKG</sequence>
<reference key="1">
    <citation type="journal article" date="1997" name="Nature">
        <title>The complete genome sequence of the gastric pathogen Helicobacter pylori.</title>
        <authorList>
            <person name="Tomb J.-F."/>
            <person name="White O."/>
            <person name="Kerlavage A.R."/>
            <person name="Clayton R.A."/>
            <person name="Sutton G.G."/>
            <person name="Fleischmann R.D."/>
            <person name="Ketchum K.A."/>
            <person name="Klenk H.-P."/>
            <person name="Gill S.R."/>
            <person name="Dougherty B.A."/>
            <person name="Nelson K.E."/>
            <person name="Quackenbush J."/>
            <person name="Zhou L."/>
            <person name="Kirkness E.F."/>
            <person name="Peterson S.N."/>
            <person name="Loftus B.J."/>
            <person name="Richardson D.L."/>
            <person name="Dodson R.J."/>
            <person name="Khalak H.G."/>
            <person name="Glodek A."/>
            <person name="McKenney K."/>
            <person name="FitzGerald L.M."/>
            <person name="Lee N."/>
            <person name="Adams M.D."/>
            <person name="Hickey E.K."/>
            <person name="Berg D.E."/>
            <person name="Gocayne J.D."/>
            <person name="Utterback T.R."/>
            <person name="Peterson J.D."/>
            <person name="Kelley J.M."/>
            <person name="Cotton M.D."/>
            <person name="Weidman J.F."/>
            <person name="Fujii C."/>
            <person name="Bowman C."/>
            <person name="Watthey L."/>
            <person name="Wallin E."/>
            <person name="Hayes W.S."/>
            <person name="Borodovsky M."/>
            <person name="Karp P.D."/>
            <person name="Smith H.O."/>
            <person name="Fraser C.M."/>
            <person name="Venter J.C."/>
        </authorList>
    </citation>
    <scope>NUCLEOTIDE SEQUENCE [LARGE SCALE GENOMIC DNA]</scope>
    <source>
        <strain>ATCC 700392 / 26695</strain>
    </source>
</reference>
<protein>
    <recommendedName>
        <fullName>Phenylalanine--tRNA ligase beta subunit</fullName>
        <ecNumber>6.1.1.20</ecNumber>
    </recommendedName>
    <alternativeName>
        <fullName>Phenylalanyl-tRNA synthetase beta subunit</fullName>
        <shortName>PheRS</shortName>
    </alternativeName>
</protein>
<gene>
    <name type="primary">pheT</name>
    <name type="ordered locus">HP_0402</name>
</gene>
<feature type="chain" id="PRO_0000126893" description="Phenylalanine--tRNA ligase beta subunit">
    <location>
        <begin position="1"/>
        <end position="764"/>
    </location>
</feature>
<feature type="domain" description="tRNA-binding">
    <location>
        <begin position="38"/>
        <end position="148"/>
    </location>
</feature>
<feature type="domain" description="B5">
    <location>
        <begin position="375"/>
        <end position="455"/>
    </location>
</feature>
<feature type="domain" description="FDX-ACB">
    <location>
        <begin position="673"/>
        <end position="763"/>
    </location>
</feature>
<feature type="binding site" evidence="1">
    <location>
        <position position="433"/>
    </location>
    <ligand>
        <name>Mg(2+)</name>
        <dbReference type="ChEBI" id="CHEBI:18420"/>
        <note>shared with alpha subunit</note>
    </ligand>
</feature>
<feature type="binding site" evidence="1">
    <location>
        <position position="439"/>
    </location>
    <ligand>
        <name>Mg(2+)</name>
        <dbReference type="ChEBI" id="CHEBI:18420"/>
        <note>shared with alpha subunit</note>
    </ligand>
</feature>
<feature type="binding site" evidence="1">
    <location>
        <position position="442"/>
    </location>
    <ligand>
        <name>Mg(2+)</name>
        <dbReference type="ChEBI" id="CHEBI:18420"/>
        <note>shared with alpha subunit</note>
    </ligand>
</feature>
<feature type="binding site" evidence="1">
    <location>
        <position position="443"/>
    </location>
    <ligand>
        <name>Mg(2+)</name>
        <dbReference type="ChEBI" id="CHEBI:18420"/>
        <note>shared with alpha subunit</note>
    </ligand>
</feature>
<evidence type="ECO:0000250" key="1"/>
<evidence type="ECO:0000305" key="2"/>